<protein>
    <recommendedName>
        <fullName evidence="1">Small ribosomal subunit protein uS5</fullName>
    </recommendedName>
    <alternativeName>
        <fullName evidence="2">30S ribosomal protein S5</fullName>
    </alternativeName>
</protein>
<name>RS5_BART1</name>
<sequence>MAQKERGEREERDNEFVDRLVHINRVAKVVKGGRRFGFAALVVVGDQKGRVGFGHGKAREVPEAVRKATESAKRGMIYVPLRSGRTLHHDLEGRHGAGRVLLRSASAGTGIIAGGPMRAIFEALGMQDVVAKSLGSSNPYNMVRATFDALKHQMHPRDIAAQRGIKYSTLQARRRHLVDVEG</sequence>
<evidence type="ECO:0000255" key="1">
    <source>
        <dbReference type="HAMAP-Rule" id="MF_01307"/>
    </source>
</evidence>
<evidence type="ECO:0000305" key="2"/>
<proteinExistence type="inferred from homology"/>
<accession>A9IW04</accession>
<feature type="chain" id="PRO_1000165441" description="Small ribosomal subunit protein uS5">
    <location>
        <begin position="1"/>
        <end position="182"/>
    </location>
</feature>
<feature type="domain" description="S5 DRBM" evidence="1">
    <location>
        <begin position="16"/>
        <end position="79"/>
    </location>
</feature>
<comment type="function">
    <text evidence="1">With S4 and S12 plays an important role in translational accuracy.</text>
</comment>
<comment type="function">
    <text evidence="1">Located at the back of the 30S subunit body where it stabilizes the conformation of the head with respect to the body.</text>
</comment>
<comment type="subunit">
    <text evidence="1">Part of the 30S ribosomal subunit. Contacts proteins S4 and S8.</text>
</comment>
<comment type="domain">
    <text>The N-terminal domain interacts with the head of the 30S subunit; the C-terminal domain interacts with the body and contacts protein S4. The interaction surface between S4 and S5 is involved in control of translational fidelity.</text>
</comment>
<comment type="similarity">
    <text evidence="1">Belongs to the universal ribosomal protein uS5 family.</text>
</comment>
<reference key="1">
    <citation type="journal article" date="2007" name="Nat. Genet.">
        <title>Genomic analysis of Bartonella identifies type IV secretion systems as host adaptability factors.</title>
        <authorList>
            <person name="Saenz H.L."/>
            <person name="Engel P."/>
            <person name="Stoeckli M.C."/>
            <person name="Lanz C."/>
            <person name="Raddatz G."/>
            <person name="Vayssier-Taussat M."/>
            <person name="Birtles R."/>
            <person name="Schuster S.C."/>
            <person name="Dehio C."/>
        </authorList>
    </citation>
    <scope>NUCLEOTIDE SEQUENCE [LARGE SCALE GENOMIC DNA]</scope>
    <source>
        <strain>CIP 105476 / IBS 506</strain>
    </source>
</reference>
<gene>
    <name evidence="1" type="primary">rpsE</name>
    <name type="ordered locus">BT_1501</name>
</gene>
<organism>
    <name type="scientific">Bartonella tribocorum (strain CIP 105476 / IBS 506)</name>
    <dbReference type="NCBI Taxonomy" id="382640"/>
    <lineage>
        <taxon>Bacteria</taxon>
        <taxon>Pseudomonadati</taxon>
        <taxon>Pseudomonadota</taxon>
        <taxon>Alphaproteobacteria</taxon>
        <taxon>Hyphomicrobiales</taxon>
        <taxon>Bartonellaceae</taxon>
        <taxon>Bartonella</taxon>
    </lineage>
</organism>
<keyword id="KW-0687">Ribonucleoprotein</keyword>
<keyword id="KW-0689">Ribosomal protein</keyword>
<keyword id="KW-0694">RNA-binding</keyword>
<keyword id="KW-0699">rRNA-binding</keyword>
<dbReference type="EMBL" id="AM260525">
    <property type="protein sequence ID" value="CAK01847.1"/>
    <property type="molecule type" value="Genomic_DNA"/>
</dbReference>
<dbReference type="RefSeq" id="WP_005773287.1">
    <property type="nucleotide sequence ID" value="NC_010161.1"/>
</dbReference>
<dbReference type="SMR" id="A9IW04"/>
<dbReference type="GeneID" id="71061542"/>
<dbReference type="KEGG" id="btr:BT_1501"/>
<dbReference type="eggNOG" id="COG0098">
    <property type="taxonomic scope" value="Bacteria"/>
</dbReference>
<dbReference type="HOGENOM" id="CLU_065898_2_2_5"/>
<dbReference type="Proteomes" id="UP000001592">
    <property type="component" value="Chromosome"/>
</dbReference>
<dbReference type="GO" id="GO:0015935">
    <property type="term" value="C:small ribosomal subunit"/>
    <property type="evidence" value="ECO:0007669"/>
    <property type="project" value="InterPro"/>
</dbReference>
<dbReference type="GO" id="GO:0019843">
    <property type="term" value="F:rRNA binding"/>
    <property type="evidence" value="ECO:0007669"/>
    <property type="project" value="UniProtKB-UniRule"/>
</dbReference>
<dbReference type="GO" id="GO:0003735">
    <property type="term" value="F:structural constituent of ribosome"/>
    <property type="evidence" value="ECO:0007669"/>
    <property type="project" value="InterPro"/>
</dbReference>
<dbReference type="GO" id="GO:0006412">
    <property type="term" value="P:translation"/>
    <property type="evidence" value="ECO:0007669"/>
    <property type="project" value="UniProtKB-UniRule"/>
</dbReference>
<dbReference type="FunFam" id="3.30.160.20:FF:000001">
    <property type="entry name" value="30S ribosomal protein S5"/>
    <property type="match status" value="1"/>
</dbReference>
<dbReference type="FunFam" id="3.30.230.10:FF:000002">
    <property type="entry name" value="30S ribosomal protein S5"/>
    <property type="match status" value="1"/>
</dbReference>
<dbReference type="Gene3D" id="3.30.160.20">
    <property type="match status" value="1"/>
</dbReference>
<dbReference type="Gene3D" id="3.30.230.10">
    <property type="match status" value="1"/>
</dbReference>
<dbReference type="HAMAP" id="MF_01307_B">
    <property type="entry name" value="Ribosomal_uS5_B"/>
    <property type="match status" value="1"/>
</dbReference>
<dbReference type="InterPro" id="IPR020568">
    <property type="entry name" value="Ribosomal_Su5_D2-typ_SF"/>
</dbReference>
<dbReference type="InterPro" id="IPR000851">
    <property type="entry name" value="Ribosomal_uS5"/>
</dbReference>
<dbReference type="InterPro" id="IPR005712">
    <property type="entry name" value="Ribosomal_uS5_bac-type"/>
</dbReference>
<dbReference type="InterPro" id="IPR005324">
    <property type="entry name" value="Ribosomal_uS5_C"/>
</dbReference>
<dbReference type="InterPro" id="IPR013810">
    <property type="entry name" value="Ribosomal_uS5_N"/>
</dbReference>
<dbReference type="InterPro" id="IPR018192">
    <property type="entry name" value="Ribosomal_uS5_N_CS"/>
</dbReference>
<dbReference type="InterPro" id="IPR014721">
    <property type="entry name" value="Ribsml_uS5_D2-typ_fold_subgr"/>
</dbReference>
<dbReference type="NCBIfam" id="TIGR01021">
    <property type="entry name" value="rpsE_bact"/>
    <property type="match status" value="1"/>
</dbReference>
<dbReference type="PANTHER" id="PTHR48277">
    <property type="entry name" value="MITOCHONDRIAL RIBOSOMAL PROTEIN S5"/>
    <property type="match status" value="1"/>
</dbReference>
<dbReference type="PANTHER" id="PTHR48277:SF1">
    <property type="entry name" value="MITOCHONDRIAL RIBOSOMAL PROTEIN S5"/>
    <property type="match status" value="1"/>
</dbReference>
<dbReference type="Pfam" id="PF00333">
    <property type="entry name" value="Ribosomal_S5"/>
    <property type="match status" value="1"/>
</dbReference>
<dbReference type="Pfam" id="PF03719">
    <property type="entry name" value="Ribosomal_S5_C"/>
    <property type="match status" value="1"/>
</dbReference>
<dbReference type="SUPFAM" id="SSF54768">
    <property type="entry name" value="dsRNA-binding domain-like"/>
    <property type="match status" value="1"/>
</dbReference>
<dbReference type="SUPFAM" id="SSF54211">
    <property type="entry name" value="Ribosomal protein S5 domain 2-like"/>
    <property type="match status" value="1"/>
</dbReference>
<dbReference type="PROSITE" id="PS00585">
    <property type="entry name" value="RIBOSOMAL_S5"/>
    <property type="match status" value="1"/>
</dbReference>
<dbReference type="PROSITE" id="PS50881">
    <property type="entry name" value="S5_DSRBD"/>
    <property type="match status" value="1"/>
</dbReference>